<feature type="chain" id="PRO_1000088445" description="Adaptive-response sensory kinase SasA">
    <location>
        <begin position="1"/>
        <end position="372"/>
    </location>
</feature>
<feature type="domain" description="Histidine kinase" evidence="1">
    <location>
        <begin position="147"/>
        <end position="360"/>
    </location>
</feature>
<feature type="modified residue" description="Phosphohistidine; by autocatalysis" evidence="1">
    <location>
        <position position="150"/>
    </location>
</feature>
<dbReference type="EC" id="2.7.13.3" evidence="1"/>
<dbReference type="EMBL" id="CP000551">
    <property type="protein sequence ID" value="ABM70467.1"/>
    <property type="molecule type" value="Genomic_DNA"/>
</dbReference>
<dbReference type="RefSeq" id="WP_011818614.1">
    <property type="nucleotide sequence ID" value="NC_008816.1"/>
</dbReference>
<dbReference type="SMR" id="A2BRQ6"/>
<dbReference type="STRING" id="146891.A9601_11831"/>
<dbReference type="KEGG" id="pmb:A9601_11831"/>
<dbReference type="eggNOG" id="COG2205">
    <property type="taxonomic scope" value="Bacteria"/>
</dbReference>
<dbReference type="HOGENOM" id="CLU_723030_0_0_3"/>
<dbReference type="OrthoDB" id="9773956at2"/>
<dbReference type="Proteomes" id="UP000002590">
    <property type="component" value="Chromosome"/>
</dbReference>
<dbReference type="GO" id="GO:0005524">
    <property type="term" value="F:ATP binding"/>
    <property type="evidence" value="ECO:0007669"/>
    <property type="project" value="UniProtKB-KW"/>
</dbReference>
<dbReference type="GO" id="GO:0000156">
    <property type="term" value="F:phosphorelay response regulator activity"/>
    <property type="evidence" value="ECO:0007669"/>
    <property type="project" value="TreeGrafter"/>
</dbReference>
<dbReference type="GO" id="GO:0000155">
    <property type="term" value="F:phosphorelay sensor kinase activity"/>
    <property type="evidence" value="ECO:0007669"/>
    <property type="project" value="InterPro"/>
</dbReference>
<dbReference type="GO" id="GO:0030295">
    <property type="term" value="F:protein kinase activator activity"/>
    <property type="evidence" value="ECO:0007669"/>
    <property type="project" value="TreeGrafter"/>
</dbReference>
<dbReference type="GO" id="GO:0007623">
    <property type="term" value="P:circadian rhythm"/>
    <property type="evidence" value="ECO:0007669"/>
    <property type="project" value="UniProtKB-UniRule"/>
</dbReference>
<dbReference type="GO" id="GO:0007234">
    <property type="term" value="P:osmosensory signaling via phosphorelay pathway"/>
    <property type="evidence" value="ECO:0007669"/>
    <property type="project" value="TreeGrafter"/>
</dbReference>
<dbReference type="CDD" id="cd00075">
    <property type="entry name" value="HATPase"/>
    <property type="match status" value="1"/>
</dbReference>
<dbReference type="CDD" id="cd00082">
    <property type="entry name" value="HisKA"/>
    <property type="match status" value="1"/>
</dbReference>
<dbReference type="FunFam" id="3.30.565.10:FF:000006">
    <property type="entry name" value="Sensor histidine kinase WalK"/>
    <property type="match status" value="1"/>
</dbReference>
<dbReference type="Gene3D" id="1.10.287.130">
    <property type="match status" value="1"/>
</dbReference>
<dbReference type="Gene3D" id="3.40.30.10">
    <property type="entry name" value="Glutaredoxin"/>
    <property type="match status" value="1"/>
</dbReference>
<dbReference type="Gene3D" id="3.30.565.10">
    <property type="entry name" value="Histidine kinase-like ATPase, C-terminal domain"/>
    <property type="match status" value="1"/>
</dbReference>
<dbReference type="HAMAP" id="MF_01837">
    <property type="entry name" value="Kinase_SasA"/>
    <property type="match status" value="1"/>
</dbReference>
<dbReference type="InterPro" id="IPR036890">
    <property type="entry name" value="HATPase_C_sf"/>
</dbReference>
<dbReference type="InterPro" id="IPR005467">
    <property type="entry name" value="His_kinase_dom"/>
</dbReference>
<dbReference type="InterPro" id="IPR003661">
    <property type="entry name" value="HisK_dim/P_dom"/>
</dbReference>
<dbReference type="InterPro" id="IPR036097">
    <property type="entry name" value="HisK_dim/P_sf"/>
</dbReference>
<dbReference type="InterPro" id="IPR011649">
    <property type="entry name" value="KaiB_domain"/>
</dbReference>
<dbReference type="InterPro" id="IPR023527">
    <property type="entry name" value="Kinase_SasA"/>
</dbReference>
<dbReference type="InterPro" id="IPR052545">
    <property type="entry name" value="Light-responsive_reg"/>
</dbReference>
<dbReference type="InterPro" id="IPR004358">
    <property type="entry name" value="Sig_transdc_His_kin-like_C"/>
</dbReference>
<dbReference type="InterPro" id="IPR036249">
    <property type="entry name" value="Thioredoxin-like_sf"/>
</dbReference>
<dbReference type="NCBIfam" id="NF006800">
    <property type="entry name" value="PRK09303.1"/>
    <property type="match status" value="1"/>
</dbReference>
<dbReference type="PANTHER" id="PTHR42878:SF7">
    <property type="entry name" value="SENSOR HISTIDINE KINASE GLRK"/>
    <property type="match status" value="1"/>
</dbReference>
<dbReference type="PANTHER" id="PTHR42878">
    <property type="entry name" value="TWO-COMPONENT HISTIDINE KINASE"/>
    <property type="match status" value="1"/>
</dbReference>
<dbReference type="Pfam" id="PF02518">
    <property type="entry name" value="HATPase_c"/>
    <property type="match status" value="1"/>
</dbReference>
<dbReference type="Pfam" id="PF00512">
    <property type="entry name" value="HisKA"/>
    <property type="match status" value="1"/>
</dbReference>
<dbReference type="Pfam" id="PF07689">
    <property type="entry name" value="KaiB"/>
    <property type="match status" value="1"/>
</dbReference>
<dbReference type="PRINTS" id="PR00344">
    <property type="entry name" value="BCTRLSENSOR"/>
</dbReference>
<dbReference type="SMART" id="SM00387">
    <property type="entry name" value="HATPase_c"/>
    <property type="match status" value="1"/>
</dbReference>
<dbReference type="SMART" id="SM00388">
    <property type="entry name" value="HisKA"/>
    <property type="match status" value="1"/>
</dbReference>
<dbReference type="SMART" id="SM01248">
    <property type="entry name" value="KaiB"/>
    <property type="match status" value="1"/>
</dbReference>
<dbReference type="SUPFAM" id="SSF55874">
    <property type="entry name" value="ATPase domain of HSP90 chaperone/DNA topoisomerase II/histidine kinase"/>
    <property type="match status" value="1"/>
</dbReference>
<dbReference type="SUPFAM" id="SSF47384">
    <property type="entry name" value="Homodimeric domain of signal transducing histidine kinase"/>
    <property type="match status" value="1"/>
</dbReference>
<dbReference type="SUPFAM" id="SSF52833">
    <property type="entry name" value="Thioredoxin-like"/>
    <property type="match status" value="1"/>
</dbReference>
<dbReference type="PROSITE" id="PS50109">
    <property type="entry name" value="HIS_KIN"/>
    <property type="match status" value="1"/>
</dbReference>
<name>SASA_PROMS</name>
<proteinExistence type="inferred from homology"/>
<protein>
    <recommendedName>
        <fullName evidence="1">Adaptive-response sensory kinase SasA</fullName>
        <ecNumber evidence="1">2.7.13.3</ecNumber>
    </recommendedName>
    <alternativeName>
        <fullName evidence="1">Sensor histidine kinase SasA</fullName>
    </alternativeName>
</protein>
<gene>
    <name evidence="1" type="primary">sasA</name>
    <name type="ordered locus">A9601_11831</name>
</gene>
<sequence length="372" mass="42366">MNDKKELKLILVAARNQLSSNDIKCLIAYLESDDCEFETSLQISEPKEQPELLELHRLVAIPALIKVSPAPKQIFAGSNIFSQLQKWLPRWSQEGLTKNLGINLQPSKIDSTRTQKEFLLEDELLVLRQENETLTKRIESQERLLRMVAHELRTPLTAATLAVQSQKLGQIDISKLQEVIKRRLEEIELLSQDLLEVGTTKWEALFNPQKIDLGNISAEVILELEKFWRIRNIEIDTDIPSDLPSVFADQRRMRQVFLNLIENAIKFSKDSGSIKITMIHKTNQWVEITICDKGAGIPLSEQKRIFLDRVRLPQTSEGTSGFGIGLSVCRRIVQVHGGRIWVVSEVGVGSCFHFTVPVWQGQNKEQQNLTKG</sequence>
<comment type="function">
    <text evidence="1">Member of the two-component regulatory system SasA/RpaA involved in genome-wide circadian gene expression. One of several clock output pathways. Participates in the Kai clock protein complex, the main circadian regulator in cyanobacteria, via its interaction with KaiC. KaiC enhances the autophosphorylation activity of SasA, which then transfers its phosphate group to RpaA to activate it. In addition to its output function, recruits fold-shifted KaiB (KaiB(fs)) to KaiC to cooperatively form the KaiB(6):KaiC(6) complex (independent of SasA kinase activity). Required for robustness of the circadian rhythm of gene expression and is involved in clock output, also required for adaptation to light/dark cycles.</text>
</comment>
<comment type="catalytic activity">
    <reaction evidence="1">
        <text>ATP + protein L-histidine = ADP + protein N-phospho-L-histidine.</text>
        <dbReference type="EC" id="2.7.13.3"/>
    </reaction>
</comment>
<comment type="subunit">
    <text evidence="1">Homooligomerizes. Interacts with KaiC. Participates in the KaiBC complex, whose core is composed of a KaiC homohexamer and 6 KaiB.</text>
</comment>
<comment type="domain">
    <text evidence="1">The N-terminus interacts with KaiC, while the C-terminal histidine kinase domain autophosphorylates and is probably responsible for self-oligomerization. The N-terminal domain stimulates the C-terminus to autophosphorylate.</text>
</comment>
<reference key="1">
    <citation type="journal article" date="2007" name="PLoS Genet.">
        <title>Patterns and implications of gene gain and loss in the evolution of Prochlorococcus.</title>
        <authorList>
            <person name="Kettler G.C."/>
            <person name="Martiny A.C."/>
            <person name="Huang K."/>
            <person name="Zucker J."/>
            <person name="Coleman M.L."/>
            <person name="Rodrigue S."/>
            <person name="Chen F."/>
            <person name="Lapidus A."/>
            <person name="Ferriera S."/>
            <person name="Johnson J."/>
            <person name="Steglich C."/>
            <person name="Church G.M."/>
            <person name="Richardson P."/>
            <person name="Chisholm S.W."/>
        </authorList>
    </citation>
    <scope>NUCLEOTIDE SEQUENCE [LARGE SCALE GENOMIC DNA]</scope>
    <source>
        <strain>AS9601</strain>
    </source>
</reference>
<accession>A2BRQ6</accession>
<keyword id="KW-0067">ATP-binding</keyword>
<keyword id="KW-0090">Biological rhythms</keyword>
<keyword id="KW-0418">Kinase</keyword>
<keyword id="KW-0547">Nucleotide-binding</keyword>
<keyword id="KW-0597">Phosphoprotein</keyword>
<keyword id="KW-0808">Transferase</keyword>
<keyword id="KW-0902">Two-component regulatory system</keyword>
<evidence type="ECO:0000255" key="1">
    <source>
        <dbReference type="HAMAP-Rule" id="MF_01837"/>
    </source>
</evidence>
<organism>
    <name type="scientific">Prochlorococcus marinus (strain AS9601)</name>
    <dbReference type="NCBI Taxonomy" id="146891"/>
    <lineage>
        <taxon>Bacteria</taxon>
        <taxon>Bacillati</taxon>
        <taxon>Cyanobacteriota</taxon>
        <taxon>Cyanophyceae</taxon>
        <taxon>Synechococcales</taxon>
        <taxon>Prochlorococcaceae</taxon>
        <taxon>Prochlorococcus</taxon>
    </lineage>
</organism>